<organism>
    <name type="scientific">Ehrlichia chaffeensis (strain ATCC CRL-10679 / Arkansas)</name>
    <dbReference type="NCBI Taxonomy" id="205920"/>
    <lineage>
        <taxon>Bacteria</taxon>
        <taxon>Pseudomonadati</taxon>
        <taxon>Pseudomonadota</taxon>
        <taxon>Alphaproteobacteria</taxon>
        <taxon>Rickettsiales</taxon>
        <taxon>Anaplasmataceae</taxon>
        <taxon>Ehrlichia</taxon>
    </lineage>
</organism>
<comment type="function">
    <text evidence="1">Catalyzes the attachment of glutamate to tRNA(Glu) in a two-step reaction: glutamate is first activated by ATP to form Glu-AMP and then transferred to the acceptor end of tRNA(Glu).</text>
</comment>
<comment type="catalytic activity">
    <reaction evidence="1">
        <text>tRNA(Glu) + L-glutamate + ATP = L-glutamyl-tRNA(Glu) + AMP + diphosphate</text>
        <dbReference type="Rhea" id="RHEA:23540"/>
        <dbReference type="Rhea" id="RHEA-COMP:9663"/>
        <dbReference type="Rhea" id="RHEA-COMP:9680"/>
        <dbReference type="ChEBI" id="CHEBI:29985"/>
        <dbReference type="ChEBI" id="CHEBI:30616"/>
        <dbReference type="ChEBI" id="CHEBI:33019"/>
        <dbReference type="ChEBI" id="CHEBI:78442"/>
        <dbReference type="ChEBI" id="CHEBI:78520"/>
        <dbReference type="ChEBI" id="CHEBI:456215"/>
        <dbReference type="EC" id="6.1.1.17"/>
    </reaction>
</comment>
<comment type="subunit">
    <text evidence="1">Monomer.</text>
</comment>
<comment type="subcellular location">
    <subcellularLocation>
        <location evidence="1">Cytoplasm</location>
    </subcellularLocation>
</comment>
<comment type="similarity">
    <text evidence="1">Belongs to the class-I aminoacyl-tRNA synthetase family. Glutamate--tRNA ligase type 1 subfamily.</text>
</comment>
<gene>
    <name evidence="1" type="primary">gltX1</name>
    <name type="synonym">gltX-1</name>
    <name type="ordered locus">ECH_0208</name>
</gene>
<feature type="chain" id="PRO_0000237362" description="Glutamate--tRNA ligase 1">
    <location>
        <begin position="1"/>
        <end position="443"/>
    </location>
</feature>
<feature type="short sequence motif" description="'HIGH' region" evidence="1">
    <location>
        <begin position="7"/>
        <end position="17"/>
    </location>
</feature>
<feature type="short sequence motif" description="'KMSKS' region" evidence="1">
    <location>
        <begin position="236"/>
        <end position="240"/>
    </location>
</feature>
<feature type="binding site" evidence="1">
    <location>
        <position position="239"/>
    </location>
    <ligand>
        <name>ATP</name>
        <dbReference type="ChEBI" id="CHEBI:30616"/>
    </ligand>
</feature>
<keyword id="KW-0030">Aminoacyl-tRNA synthetase</keyword>
<keyword id="KW-0067">ATP-binding</keyword>
<keyword id="KW-0963">Cytoplasm</keyword>
<keyword id="KW-0436">Ligase</keyword>
<keyword id="KW-0547">Nucleotide-binding</keyword>
<keyword id="KW-0648">Protein biosynthesis</keyword>
<keyword id="KW-1185">Reference proteome</keyword>
<name>SYE1_EHRCR</name>
<sequence>MITRFAPSPTGYLHVGNVRTALVCWLYARKQNGKFLLRFDDTDTQRSKDEYIREIENDLVWLNINWDSSFRQSSRFDRYEDVFNYLLKEGLIYPCYESKEELEFKRKMKLKLGLPPIYDRSALNLTQAEKDKYSERAPYFRFKIDQNQLISWNDEVRGKVSFNSENISDPIIRRVDGTYTYMLPSIIDDMDFNVTHIIRGEDHISNTAVQIQMLHALKASIPIFSHLSLLYSDDNKISKRVGGSSVKDMQSYGLEPMAINSYFAKIGTSNPVSVHTRMCGLIDSFDITTFSQAPTKFNIDDVLKLNPKVLCSMSFDDVRNRLQSFNITSPSFWNFVCGNIDKFSDIEGWAKICSGDMIPVIGQDDKDFIMLALNMLPQGEVRDNTWNLWISNIKQHTDRRAKNLFTPLRLALTGLSTGPELAKLLPLIGRVEIVRRLSYSEVQ</sequence>
<protein>
    <recommendedName>
        <fullName evidence="1">Glutamate--tRNA ligase 1</fullName>
        <ecNumber evidence="1">6.1.1.17</ecNumber>
    </recommendedName>
    <alternativeName>
        <fullName evidence="1">Glutamyl-tRNA synthetase 1</fullName>
        <shortName evidence="1">GluRS 1</shortName>
    </alternativeName>
</protein>
<reference key="1">
    <citation type="journal article" date="2006" name="PLoS Genet.">
        <title>Comparative genomics of emerging human ehrlichiosis agents.</title>
        <authorList>
            <person name="Dunning Hotopp J.C."/>
            <person name="Lin M."/>
            <person name="Madupu R."/>
            <person name="Crabtree J."/>
            <person name="Angiuoli S.V."/>
            <person name="Eisen J.A."/>
            <person name="Seshadri R."/>
            <person name="Ren Q."/>
            <person name="Wu M."/>
            <person name="Utterback T.R."/>
            <person name="Smith S."/>
            <person name="Lewis M."/>
            <person name="Khouri H."/>
            <person name="Zhang C."/>
            <person name="Niu H."/>
            <person name="Lin Q."/>
            <person name="Ohashi N."/>
            <person name="Zhi N."/>
            <person name="Nelson W.C."/>
            <person name="Brinkac L.M."/>
            <person name="Dodson R.J."/>
            <person name="Rosovitz M.J."/>
            <person name="Sundaram J.P."/>
            <person name="Daugherty S.C."/>
            <person name="Davidsen T."/>
            <person name="Durkin A.S."/>
            <person name="Gwinn M.L."/>
            <person name="Haft D.H."/>
            <person name="Selengut J.D."/>
            <person name="Sullivan S.A."/>
            <person name="Zafar N."/>
            <person name="Zhou L."/>
            <person name="Benahmed F."/>
            <person name="Forberger H."/>
            <person name="Halpin R."/>
            <person name="Mulligan S."/>
            <person name="Robinson J."/>
            <person name="White O."/>
            <person name="Rikihisa Y."/>
            <person name="Tettelin H."/>
        </authorList>
    </citation>
    <scope>NUCLEOTIDE SEQUENCE [LARGE SCALE GENOMIC DNA]</scope>
    <source>
        <strain>ATCC CRL-10679 / Arkansas</strain>
    </source>
</reference>
<dbReference type="EC" id="6.1.1.17" evidence="1"/>
<dbReference type="EMBL" id="CP000236">
    <property type="protein sequence ID" value="ABD45168.1"/>
    <property type="molecule type" value="Genomic_DNA"/>
</dbReference>
<dbReference type="SMR" id="Q2GHQ1"/>
<dbReference type="STRING" id="205920.ECH_0208"/>
<dbReference type="KEGG" id="ech:ECH_0208"/>
<dbReference type="eggNOG" id="COG0008">
    <property type="taxonomic scope" value="Bacteria"/>
</dbReference>
<dbReference type="HOGENOM" id="CLU_015768_6_1_5"/>
<dbReference type="OrthoDB" id="9807503at2"/>
<dbReference type="Proteomes" id="UP000008320">
    <property type="component" value="Chromosome"/>
</dbReference>
<dbReference type="GO" id="GO:0005737">
    <property type="term" value="C:cytoplasm"/>
    <property type="evidence" value="ECO:0007669"/>
    <property type="project" value="UniProtKB-SubCell"/>
</dbReference>
<dbReference type="GO" id="GO:0005524">
    <property type="term" value="F:ATP binding"/>
    <property type="evidence" value="ECO:0007669"/>
    <property type="project" value="UniProtKB-UniRule"/>
</dbReference>
<dbReference type="GO" id="GO:0004818">
    <property type="term" value="F:glutamate-tRNA ligase activity"/>
    <property type="evidence" value="ECO:0007669"/>
    <property type="project" value="UniProtKB-UniRule"/>
</dbReference>
<dbReference type="GO" id="GO:0000049">
    <property type="term" value="F:tRNA binding"/>
    <property type="evidence" value="ECO:0007669"/>
    <property type="project" value="InterPro"/>
</dbReference>
<dbReference type="GO" id="GO:0006424">
    <property type="term" value="P:glutamyl-tRNA aminoacylation"/>
    <property type="evidence" value="ECO:0007669"/>
    <property type="project" value="UniProtKB-UniRule"/>
</dbReference>
<dbReference type="Gene3D" id="1.10.10.350">
    <property type="match status" value="1"/>
</dbReference>
<dbReference type="Gene3D" id="3.40.50.620">
    <property type="entry name" value="HUPs"/>
    <property type="match status" value="1"/>
</dbReference>
<dbReference type="HAMAP" id="MF_00022">
    <property type="entry name" value="Glu_tRNA_synth_type1"/>
    <property type="match status" value="1"/>
</dbReference>
<dbReference type="InterPro" id="IPR045462">
    <property type="entry name" value="aa-tRNA-synth_I_cd-bd"/>
</dbReference>
<dbReference type="InterPro" id="IPR020751">
    <property type="entry name" value="aa-tRNA-synth_I_codon-bd_sub2"/>
</dbReference>
<dbReference type="InterPro" id="IPR001412">
    <property type="entry name" value="aa-tRNA-synth_I_CS"/>
</dbReference>
<dbReference type="InterPro" id="IPR008925">
    <property type="entry name" value="aa_tRNA-synth_I_cd-bd_sf"/>
</dbReference>
<dbReference type="InterPro" id="IPR004527">
    <property type="entry name" value="Glu-tRNA-ligase_bac/mito"/>
</dbReference>
<dbReference type="InterPro" id="IPR000924">
    <property type="entry name" value="Glu/Gln-tRNA-synth"/>
</dbReference>
<dbReference type="InterPro" id="IPR020058">
    <property type="entry name" value="Glu/Gln-tRNA-synth_Ib_cat-dom"/>
</dbReference>
<dbReference type="InterPro" id="IPR049940">
    <property type="entry name" value="GluQ/Sye"/>
</dbReference>
<dbReference type="InterPro" id="IPR014729">
    <property type="entry name" value="Rossmann-like_a/b/a_fold"/>
</dbReference>
<dbReference type="NCBIfam" id="TIGR00464">
    <property type="entry name" value="gltX_bact"/>
    <property type="match status" value="1"/>
</dbReference>
<dbReference type="PANTHER" id="PTHR43311">
    <property type="entry name" value="GLUTAMATE--TRNA LIGASE"/>
    <property type="match status" value="1"/>
</dbReference>
<dbReference type="PANTHER" id="PTHR43311:SF2">
    <property type="entry name" value="GLUTAMATE--TRNA LIGASE, MITOCHONDRIAL-RELATED"/>
    <property type="match status" value="1"/>
</dbReference>
<dbReference type="Pfam" id="PF19269">
    <property type="entry name" value="Anticodon_2"/>
    <property type="match status" value="1"/>
</dbReference>
<dbReference type="Pfam" id="PF00749">
    <property type="entry name" value="tRNA-synt_1c"/>
    <property type="match status" value="1"/>
</dbReference>
<dbReference type="PRINTS" id="PR00987">
    <property type="entry name" value="TRNASYNTHGLU"/>
</dbReference>
<dbReference type="SUPFAM" id="SSF48163">
    <property type="entry name" value="An anticodon-binding domain of class I aminoacyl-tRNA synthetases"/>
    <property type="match status" value="1"/>
</dbReference>
<dbReference type="SUPFAM" id="SSF52374">
    <property type="entry name" value="Nucleotidylyl transferase"/>
    <property type="match status" value="1"/>
</dbReference>
<dbReference type="PROSITE" id="PS00178">
    <property type="entry name" value="AA_TRNA_LIGASE_I"/>
    <property type="match status" value="1"/>
</dbReference>
<evidence type="ECO:0000255" key="1">
    <source>
        <dbReference type="HAMAP-Rule" id="MF_00022"/>
    </source>
</evidence>
<accession>Q2GHQ1</accession>
<proteinExistence type="inferred from homology"/>